<accession>Q89IB6</accession>
<sequence>MKAAILVFPGINRDRDMARALRLISGSEPAMVWHAETSLPAGTDLVVVPGGFSYGDYLRCGAIAARAPVMDAVRDYAAKGGLVLGVCNGFQILCESGLLPGVLMRNAQLKFICRDVHLRVERSDTPFTRGYNAGQVIRVPVAHGEGNYEADEETIQRLEGEGRVLYRYCSAEGVVDEAANINGAAHSIAGIVNDKGNVLGMMPHPENHVEDIMGCTDGRGLFAGLAQHLEKAA</sequence>
<evidence type="ECO:0000255" key="1">
    <source>
        <dbReference type="HAMAP-Rule" id="MF_00421"/>
    </source>
</evidence>
<dbReference type="EC" id="6.3.5.3" evidence="1"/>
<dbReference type="EC" id="3.5.1.2" evidence="1"/>
<dbReference type="EMBL" id="BA000040">
    <property type="protein sequence ID" value="BAC50988.1"/>
    <property type="molecule type" value="Genomic_DNA"/>
</dbReference>
<dbReference type="RefSeq" id="NP_772363.1">
    <property type="nucleotide sequence ID" value="NC_004463.1"/>
</dbReference>
<dbReference type="RefSeq" id="WP_011088468.1">
    <property type="nucleotide sequence ID" value="NC_004463.1"/>
</dbReference>
<dbReference type="SMR" id="Q89IB6"/>
<dbReference type="STRING" id="224911.AAV28_26130"/>
<dbReference type="EnsemblBacteria" id="BAC50988">
    <property type="protein sequence ID" value="BAC50988"/>
    <property type="gene ID" value="BAC50988"/>
</dbReference>
<dbReference type="GeneID" id="46492726"/>
<dbReference type="KEGG" id="bja:bll5723"/>
<dbReference type="PATRIC" id="fig|224911.44.peg.5655"/>
<dbReference type="eggNOG" id="COG0047">
    <property type="taxonomic scope" value="Bacteria"/>
</dbReference>
<dbReference type="HOGENOM" id="CLU_001031_3_1_5"/>
<dbReference type="InParanoid" id="Q89IB6"/>
<dbReference type="OrthoDB" id="9804441at2"/>
<dbReference type="PhylomeDB" id="Q89IB6"/>
<dbReference type="UniPathway" id="UPA00074">
    <property type="reaction ID" value="UER00128"/>
</dbReference>
<dbReference type="Proteomes" id="UP000002526">
    <property type="component" value="Chromosome"/>
</dbReference>
<dbReference type="GO" id="GO:0005737">
    <property type="term" value="C:cytoplasm"/>
    <property type="evidence" value="ECO:0007669"/>
    <property type="project" value="UniProtKB-SubCell"/>
</dbReference>
<dbReference type="GO" id="GO:0005524">
    <property type="term" value="F:ATP binding"/>
    <property type="evidence" value="ECO:0007669"/>
    <property type="project" value="UniProtKB-KW"/>
</dbReference>
<dbReference type="GO" id="GO:0004359">
    <property type="term" value="F:glutaminase activity"/>
    <property type="evidence" value="ECO:0007669"/>
    <property type="project" value="UniProtKB-EC"/>
</dbReference>
<dbReference type="GO" id="GO:0004642">
    <property type="term" value="F:phosphoribosylformylglycinamidine synthase activity"/>
    <property type="evidence" value="ECO:0007669"/>
    <property type="project" value="UniProtKB-UniRule"/>
</dbReference>
<dbReference type="GO" id="GO:0006189">
    <property type="term" value="P:'de novo' IMP biosynthetic process"/>
    <property type="evidence" value="ECO:0007669"/>
    <property type="project" value="UniProtKB-UniRule"/>
</dbReference>
<dbReference type="CDD" id="cd01740">
    <property type="entry name" value="GATase1_FGAR_AT"/>
    <property type="match status" value="1"/>
</dbReference>
<dbReference type="Gene3D" id="3.40.50.880">
    <property type="match status" value="1"/>
</dbReference>
<dbReference type="HAMAP" id="MF_00421">
    <property type="entry name" value="PurQ"/>
    <property type="match status" value="1"/>
</dbReference>
<dbReference type="InterPro" id="IPR029062">
    <property type="entry name" value="Class_I_gatase-like"/>
</dbReference>
<dbReference type="InterPro" id="IPR010075">
    <property type="entry name" value="PRibForGlyAmidine_synth_PurQ"/>
</dbReference>
<dbReference type="NCBIfam" id="TIGR01737">
    <property type="entry name" value="FGAM_synth_I"/>
    <property type="match status" value="1"/>
</dbReference>
<dbReference type="NCBIfam" id="NF002957">
    <property type="entry name" value="PRK03619.1"/>
    <property type="match status" value="1"/>
</dbReference>
<dbReference type="PANTHER" id="PTHR47552">
    <property type="entry name" value="PHOSPHORIBOSYLFORMYLGLYCINAMIDINE SYNTHASE SUBUNIT PURQ"/>
    <property type="match status" value="1"/>
</dbReference>
<dbReference type="PANTHER" id="PTHR47552:SF1">
    <property type="entry name" value="PHOSPHORIBOSYLFORMYLGLYCINAMIDINE SYNTHASE SUBUNIT PURQ"/>
    <property type="match status" value="1"/>
</dbReference>
<dbReference type="Pfam" id="PF13507">
    <property type="entry name" value="GATase_5"/>
    <property type="match status" value="1"/>
</dbReference>
<dbReference type="PIRSF" id="PIRSF001586">
    <property type="entry name" value="FGAM_synth_I"/>
    <property type="match status" value="1"/>
</dbReference>
<dbReference type="SMART" id="SM01211">
    <property type="entry name" value="GATase_5"/>
    <property type="match status" value="1"/>
</dbReference>
<dbReference type="SUPFAM" id="SSF52317">
    <property type="entry name" value="Class I glutamine amidotransferase-like"/>
    <property type="match status" value="1"/>
</dbReference>
<dbReference type="PROSITE" id="PS51273">
    <property type="entry name" value="GATASE_TYPE_1"/>
    <property type="match status" value="1"/>
</dbReference>
<proteinExistence type="inferred from homology"/>
<gene>
    <name evidence="1" type="primary">purQ</name>
    <name type="ordered locus">bll5723</name>
</gene>
<organism>
    <name type="scientific">Bradyrhizobium diazoefficiens (strain JCM 10833 / BCRC 13528 / IAM 13628 / NBRC 14792 / USDA 110)</name>
    <dbReference type="NCBI Taxonomy" id="224911"/>
    <lineage>
        <taxon>Bacteria</taxon>
        <taxon>Pseudomonadati</taxon>
        <taxon>Pseudomonadota</taxon>
        <taxon>Alphaproteobacteria</taxon>
        <taxon>Hyphomicrobiales</taxon>
        <taxon>Nitrobacteraceae</taxon>
        <taxon>Bradyrhizobium</taxon>
    </lineage>
</organism>
<name>PURQ_BRADU</name>
<protein>
    <recommendedName>
        <fullName evidence="1">Phosphoribosylformylglycinamidine synthase subunit PurQ</fullName>
        <shortName evidence="1">FGAM synthase</shortName>
        <ecNumber evidence="1">6.3.5.3</ecNumber>
    </recommendedName>
    <alternativeName>
        <fullName evidence="1">Formylglycinamide ribonucleotide amidotransferase subunit I</fullName>
        <shortName evidence="1">FGAR amidotransferase I</shortName>
        <shortName evidence="1">FGAR-AT I</shortName>
    </alternativeName>
    <alternativeName>
        <fullName evidence="1">Glutaminase PurQ</fullName>
        <ecNumber evidence="1">3.5.1.2</ecNumber>
    </alternativeName>
    <alternativeName>
        <fullName evidence="1">Phosphoribosylformylglycinamidine synthase subunit I</fullName>
    </alternativeName>
</protein>
<comment type="function">
    <text evidence="1">Part of the phosphoribosylformylglycinamidine synthase complex involved in the purines biosynthetic pathway. Catalyzes the ATP-dependent conversion of formylglycinamide ribonucleotide (FGAR) and glutamine to yield formylglycinamidine ribonucleotide (FGAM) and glutamate. The FGAM synthase complex is composed of three subunits. PurQ produces an ammonia molecule by converting glutamine to glutamate. PurL transfers the ammonia molecule to FGAR to form FGAM in an ATP-dependent manner. PurS interacts with PurQ and PurL and is thought to assist in the transfer of the ammonia molecule from PurQ to PurL.</text>
</comment>
<comment type="catalytic activity">
    <reaction evidence="1">
        <text>N(2)-formyl-N(1)-(5-phospho-beta-D-ribosyl)glycinamide + L-glutamine + ATP + H2O = 2-formamido-N(1)-(5-O-phospho-beta-D-ribosyl)acetamidine + L-glutamate + ADP + phosphate + H(+)</text>
        <dbReference type="Rhea" id="RHEA:17129"/>
        <dbReference type="ChEBI" id="CHEBI:15377"/>
        <dbReference type="ChEBI" id="CHEBI:15378"/>
        <dbReference type="ChEBI" id="CHEBI:29985"/>
        <dbReference type="ChEBI" id="CHEBI:30616"/>
        <dbReference type="ChEBI" id="CHEBI:43474"/>
        <dbReference type="ChEBI" id="CHEBI:58359"/>
        <dbReference type="ChEBI" id="CHEBI:147286"/>
        <dbReference type="ChEBI" id="CHEBI:147287"/>
        <dbReference type="ChEBI" id="CHEBI:456216"/>
        <dbReference type="EC" id="6.3.5.3"/>
    </reaction>
</comment>
<comment type="catalytic activity">
    <reaction evidence="1">
        <text>L-glutamine + H2O = L-glutamate + NH4(+)</text>
        <dbReference type="Rhea" id="RHEA:15889"/>
        <dbReference type="ChEBI" id="CHEBI:15377"/>
        <dbReference type="ChEBI" id="CHEBI:28938"/>
        <dbReference type="ChEBI" id="CHEBI:29985"/>
        <dbReference type="ChEBI" id="CHEBI:58359"/>
        <dbReference type="EC" id="3.5.1.2"/>
    </reaction>
</comment>
<comment type="pathway">
    <text evidence="1">Purine metabolism; IMP biosynthesis via de novo pathway; 5-amino-1-(5-phospho-D-ribosyl)imidazole from N(2)-formyl-N(1)-(5-phospho-D-ribosyl)glycinamide: step 1/2.</text>
</comment>
<comment type="subunit">
    <text evidence="1">Part of the FGAM synthase complex composed of 1 PurL, 1 PurQ and 2 PurS subunits.</text>
</comment>
<comment type="subcellular location">
    <subcellularLocation>
        <location evidence="1">Cytoplasm</location>
    </subcellularLocation>
</comment>
<reference key="1">
    <citation type="journal article" date="2002" name="DNA Res.">
        <title>Complete genomic sequence of nitrogen-fixing symbiotic bacterium Bradyrhizobium japonicum USDA110.</title>
        <authorList>
            <person name="Kaneko T."/>
            <person name="Nakamura Y."/>
            <person name="Sato S."/>
            <person name="Minamisawa K."/>
            <person name="Uchiumi T."/>
            <person name="Sasamoto S."/>
            <person name="Watanabe A."/>
            <person name="Idesawa K."/>
            <person name="Iriguchi M."/>
            <person name="Kawashima K."/>
            <person name="Kohara M."/>
            <person name="Matsumoto M."/>
            <person name="Shimpo S."/>
            <person name="Tsuruoka H."/>
            <person name="Wada T."/>
            <person name="Yamada M."/>
            <person name="Tabata S."/>
        </authorList>
    </citation>
    <scope>NUCLEOTIDE SEQUENCE [LARGE SCALE GENOMIC DNA]</scope>
    <source>
        <strain>JCM 10833 / BCRC 13528 / IAM 13628 / NBRC 14792 / USDA 110</strain>
    </source>
</reference>
<keyword id="KW-0067">ATP-binding</keyword>
<keyword id="KW-0963">Cytoplasm</keyword>
<keyword id="KW-0315">Glutamine amidotransferase</keyword>
<keyword id="KW-0378">Hydrolase</keyword>
<keyword id="KW-0436">Ligase</keyword>
<keyword id="KW-0547">Nucleotide-binding</keyword>
<keyword id="KW-0658">Purine biosynthesis</keyword>
<keyword id="KW-1185">Reference proteome</keyword>
<feature type="chain" id="PRO_0000100542" description="Phosphoribosylformylglycinamidine synthase subunit PurQ">
    <location>
        <begin position="1"/>
        <end position="233"/>
    </location>
</feature>
<feature type="domain" description="Glutamine amidotransferase type-1" evidence="1">
    <location>
        <begin position="3"/>
        <end position="233"/>
    </location>
</feature>
<feature type="active site" description="Nucleophile" evidence="1">
    <location>
        <position position="87"/>
    </location>
</feature>
<feature type="active site" evidence="1">
    <location>
        <position position="204"/>
    </location>
</feature>
<feature type="active site" evidence="1">
    <location>
        <position position="206"/>
    </location>
</feature>